<gene>
    <name type="primary">chd-3</name>
    <name type="ORF">T14G8.1</name>
</gene>
<name>CHD3_CAEEL</name>
<accession>Q22516</accession>
<accession>Q18794</accession>
<feature type="chain" id="PRO_0000080234" description="Chromodomain-helicase-DNA-binding protein 3 homolog">
    <location>
        <begin position="1"/>
        <end position="1787"/>
    </location>
</feature>
<feature type="domain" description="Chromo 1" evidence="2">
    <location>
        <begin position="373"/>
        <end position="476"/>
    </location>
</feature>
<feature type="domain" description="Chromo 2" evidence="2">
    <location>
        <begin position="501"/>
        <end position="583"/>
    </location>
</feature>
<feature type="domain" description="Helicase ATP-binding" evidence="4">
    <location>
        <begin position="628"/>
        <end position="812"/>
    </location>
</feature>
<feature type="domain" description="Helicase C-terminal" evidence="5">
    <location>
        <begin position="944"/>
        <end position="1107"/>
    </location>
</feature>
<feature type="zinc finger region" description="PHD-type 1" evidence="3">
    <location>
        <begin position="265"/>
        <end position="312"/>
    </location>
</feature>
<feature type="zinc finger region" description="PHD-type 2" evidence="3">
    <location>
        <begin position="328"/>
        <end position="375"/>
    </location>
</feature>
<feature type="region of interest" description="Disordered" evidence="6">
    <location>
        <begin position="1"/>
        <end position="80"/>
    </location>
</feature>
<feature type="region of interest" description="Disordered" evidence="6">
    <location>
        <begin position="170"/>
        <end position="258"/>
    </location>
</feature>
<feature type="region of interest" description="Disordered" evidence="6">
    <location>
        <begin position="1120"/>
        <end position="1141"/>
    </location>
</feature>
<feature type="region of interest" description="Disordered" evidence="6">
    <location>
        <begin position="1186"/>
        <end position="1212"/>
    </location>
</feature>
<feature type="region of interest" description="Disordered" evidence="6">
    <location>
        <begin position="1248"/>
        <end position="1295"/>
    </location>
</feature>
<feature type="region of interest" description="Disordered" evidence="6">
    <location>
        <begin position="1754"/>
        <end position="1787"/>
    </location>
</feature>
<feature type="short sequence motif" description="DEAH box">
    <location>
        <begin position="763"/>
        <end position="766"/>
    </location>
</feature>
<feature type="compositionally biased region" description="Acidic residues" evidence="6">
    <location>
        <begin position="10"/>
        <end position="43"/>
    </location>
</feature>
<feature type="compositionally biased region" description="Basic residues" evidence="6">
    <location>
        <begin position="56"/>
        <end position="71"/>
    </location>
</feature>
<feature type="compositionally biased region" description="Basic and acidic residues" evidence="6">
    <location>
        <begin position="192"/>
        <end position="243"/>
    </location>
</feature>
<feature type="compositionally biased region" description="Acidic residues" evidence="6">
    <location>
        <begin position="1190"/>
        <end position="1199"/>
    </location>
</feature>
<feature type="compositionally biased region" description="Polar residues" evidence="6">
    <location>
        <begin position="1248"/>
        <end position="1261"/>
    </location>
</feature>
<feature type="compositionally biased region" description="Basic and acidic residues" evidence="6">
    <location>
        <begin position="1761"/>
        <end position="1773"/>
    </location>
</feature>
<feature type="binding site" evidence="4">
    <location>
        <begin position="641"/>
        <end position="648"/>
    </location>
    <ligand>
        <name>ATP</name>
        <dbReference type="ChEBI" id="CHEBI:30616"/>
    </ligand>
</feature>
<protein>
    <recommendedName>
        <fullName>Chromodomain-helicase-DNA-binding protein 3 homolog</fullName>
        <shortName>CHD-3</shortName>
        <ecNumber evidence="1">3.6.4.-</ecNumber>
    </recommendedName>
</protein>
<reference key="1">
    <citation type="journal article" date="2000" name="Development">
        <title>The C. elegans Mi-2 chromatin-remodelling proteins function in vulval cell fate determination.</title>
        <authorList>
            <person name="von Zelewsky T."/>
            <person name="Palladino F."/>
            <person name="Brunschwig K."/>
            <person name="Tobler H."/>
            <person name="Hajnal A."/>
            <person name="Mueller F."/>
        </authorList>
    </citation>
    <scope>NUCLEOTIDE SEQUENCE [MRNA]</scope>
    <scope>FUNCTION</scope>
</reference>
<reference key="2">
    <citation type="journal article" date="1998" name="Science">
        <title>Genome sequence of the nematode C. elegans: a platform for investigating biology.</title>
        <authorList>
            <consortium name="The C. elegans sequencing consortium"/>
        </authorList>
    </citation>
    <scope>NUCLEOTIDE SEQUENCE [LARGE SCALE GENOMIC DNA]</scope>
    <source>
        <strain>Bristol N2</strain>
    </source>
</reference>
<reference key="3">
    <citation type="journal article" date="2010" name="PLoS ONE">
        <title>Different Mi-2 complexes for various developmental functions in Caenorhabditis elegans.</title>
        <authorList>
            <person name="Passannante M."/>
            <person name="Marti C.O."/>
            <person name="Pfefferli C."/>
            <person name="Moroni P.S."/>
            <person name="Kaeser-Pebernard S."/>
            <person name="Puoti A."/>
            <person name="Hunziker P."/>
            <person name="Wicky C."/>
            <person name="Muller F."/>
        </authorList>
    </citation>
    <scope>FUNCTION</scope>
    <scope>TISSUE SPECIFICITY</scope>
    <scope>DEVELOPMENTAL STAGE</scope>
</reference>
<keyword id="KW-0067">ATP-binding</keyword>
<keyword id="KW-0156">Chromatin regulator</keyword>
<keyword id="KW-0238">DNA-binding</keyword>
<keyword id="KW-0378">Hydrolase</keyword>
<keyword id="KW-0479">Metal-binding</keyword>
<keyword id="KW-0547">Nucleotide-binding</keyword>
<keyword id="KW-0539">Nucleus</keyword>
<keyword id="KW-1185">Reference proteome</keyword>
<keyword id="KW-0677">Repeat</keyword>
<keyword id="KW-0862">Zinc</keyword>
<keyword id="KW-0863">Zinc-finger</keyword>
<comment type="function">
    <text evidence="7 8">ATP-dependent chromatin-remodeling factor that has a role in notch signaling-dependent vulval cell fate determination. May also have a role in pharyngeal precursor cell specification.</text>
</comment>
<comment type="catalytic activity">
    <reaction evidence="1">
        <text>ATP + H2O = ADP + phosphate + H(+)</text>
        <dbReference type="Rhea" id="RHEA:13065"/>
        <dbReference type="ChEBI" id="CHEBI:15377"/>
        <dbReference type="ChEBI" id="CHEBI:15378"/>
        <dbReference type="ChEBI" id="CHEBI:30616"/>
        <dbReference type="ChEBI" id="CHEBI:43474"/>
        <dbReference type="ChEBI" id="CHEBI:456216"/>
    </reaction>
</comment>
<comment type="subcellular location">
    <subcellularLocation>
        <location evidence="9">Nucleus</location>
    </subcellularLocation>
</comment>
<comment type="tissue specificity">
    <text evidence="8">Expressed in the head and vulva.</text>
</comment>
<comment type="developmental stage">
    <text evidence="8">Detected around the 20 cell stage after the onset of zygotic transcription. Also expressed in adults.</text>
</comment>
<comment type="similarity">
    <text evidence="9">Belongs to the SNF2/RAD54 helicase family.</text>
</comment>
<organism>
    <name type="scientific">Caenorhabditis elegans</name>
    <dbReference type="NCBI Taxonomy" id="6239"/>
    <lineage>
        <taxon>Eukaryota</taxon>
        <taxon>Metazoa</taxon>
        <taxon>Ecdysozoa</taxon>
        <taxon>Nematoda</taxon>
        <taxon>Chromadorea</taxon>
        <taxon>Rhabditida</taxon>
        <taxon>Rhabditina</taxon>
        <taxon>Rhabditomorpha</taxon>
        <taxon>Rhabditoidea</taxon>
        <taxon>Rhabditidae</taxon>
        <taxon>Peloderinae</taxon>
        <taxon>Caenorhabditis</taxon>
    </lineage>
</organism>
<evidence type="ECO:0000250" key="1">
    <source>
        <dbReference type="UniProtKB" id="Q12873"/>
    </source>
</evidence>
<evidence type="ECO:0000255" key="2">
    <source>
        <dbReference type="PROSITE-ProRule" id="PRU00053"/>
    </source>
</evidence>
<evidence type="ECO:0000255" key="3">
    <source>
        <dbReference type="PROSITE-ProRule" id="PRU00146"/>
    </source>
</evidence>
<evidence type="ECO:0000255" key="4">
    <source>
        <dbReference type="PROSITE-ProRule" id="PRU00541"/>
    </source>
</evidence>
<evidence type="ECO:0000255" key="5">
    <source>
        <dbReference type="PROSITE-ProRule" id="PRU00542"/>
    </source>
</evidence>
<evidence type="ECO:0000256" key="6">
    <source>
        <dbReference type="SAM" id="MobiDB-lite"/>
    </source>
</evidence>
<evidence type="ECO:0000269" key="7">
    <source>
    </source>
</evidence>
<evidence type="ECO:0000269" key="8">
    <source>
    </source>
</evidence>
<evidence type="ECO:0000305" key="9"/>
<dbReference type="EC" id="3.6.4.-" evidence="1"/>
<dbReference type="EMBL" id="AF308444">
    <property type="protein sequence ID" value="AAG29837.1"/>
    <property type="molecule type" value="mRNA"/>
</dbReference>
<dbReference type="EMBL" id="Z67884">
    <property type="protein sequence ID" value="CAA91810.1"/>
    <property type="molecule type" value="Genomic_DNA"/>
</dbReference>
<dbReference type="EMBL" id="Z67881">
    <property type="protein sequence ID" value="CAA91810.1"/>
    <property type="status" value="JOINED"/>
    <property type="molecule type" value="Genomic_DNA"/>
</dbReference>
<dbReference type="PIR" id="T20160">
    <property type="entry name" value="T20160"/>
</dbReference>
<dbReference type="RefSeq" id="NP_510140.1">
    <property type="nucleotide sequence ID" value="NM_077739.8"/>
</dbReference>
<dbReference type="SMR" id="Q22516"/>
<dbReference type="BioGRID" id="46325">
    <property type="interactions" value="6"/>
</dbReference>
<dbReference type="FunCoup" id="Q22516">
    <property type="interactions" value="2588"/>
</dbReference>
<dbReference type="STRING" id="6239.T14G8.1.1"/>
<dbReference type="iPTMnet" id="Q22516"/>
<dbReference type="PaxDb" id="6239-T14G8.1"/>
<dbReference type="PeptideAtlas" id="Q22516"/>
<dbReference type="EnsemblMetazoa" id="T14G8.1.1">
    <property type="protein sequence ID" value="T14G8.1.1"/>
    <property type="gene ID" value="WBGene00000482"/>
</dbReference>
<dbReference type="GeneID" id="181421"/>
<dbReference type="KEGG" id="cel:CELE_T14G8.1"/>
<dbReference type="UCSC" id="T14G8.1">
    <property type="organism name" value="c. elegans"/>
</dbReference>
<dbReference type="AGR" id="WB:WBGene00000482"/>
<dbReference type="CTD" id="181421"/>
<dbReference type="WormBase" id="T14G8.1">
    <property type="protein sequence ID" value="CE03657"/>
    <property type="gene ID" value="WBGene00000482"/>
    <property type="gene designation" value="chd-3"/>
</dbReference>
<dbReference type="eggNOG" id="KOG0383">
    <property type="taxonomic scope" value="Eukaryota"/>
</dbReference>
<dbReference type="GeneTree" id="ENSGT00940000169383"/>
<dbReference type="HOGENOM" id="CLU_000315_22_1_1"/>
<dbReference type="InParanoid" id="Q22516"/>
<dbReference type="OMA" id="KAKSRFM"/>
<dbReference type="OrthoDB" id="5857104at2759"/>
<dbReference type="PhylomeDB" id="Q22516"/>
<dbReference type="Reactome" id="R-CEL-4551638">
    <property type="pathway name" value="SUMOylation of chromatin organization proteins"/>
</dbReference>
<dbReference type="Reactome" id="R-CEL-6804758">
    <property type="pathway name" value="Regulation of TP53 Activity through Acetylation"/>
</dbReference>
<dbReference type="Reactome" id="R-CEL-9031628">
    <property type="pathway name" value="NGF-stimulated transcription"/>
</dbReference>
<dbReference type="PRO" id="PR:Q22516"/>
<dbReference type="Proteomes" id="UP000001940">
    <property type="component" value="Chromosome X"/>
</dbReference>
<dbReference type="Bgee" id="WBGene00000482">
    <property type="expression patterns" value="Expressed in pharyngeal muscle cell (C elegans) and 3 other cell types or tissues"/>
</dbReference>
<dbReference type="GO" id="GO:0000785">
    <property type="term" value="C:chromatin"/>
    <property type="evidence" value="ECO:0000318"/>
    <property type="project" value="GO_Central"/>
</dbReference>
<dbReference type="GO" id="GO:0000118">
    <property type="term" value="C:histone deacetylase complex"/>
    <property type="evidence" value="ECO:0000250"/>
    <property type="project" value="WormBase"/>
</dbReference>
<dbReference type="GO" id="GO:0005634">
    <property type="term" value="C:nucleus"/>
    <property type="evidence" value="ECO:0000250"/>
    <property type="project" value="UniProtKB"/>
</dbReference>
<dbReference type="GO" id="GO:0016581">
    <property type="term" value="C:NuRD complex"/>
    <property type="evidence" value="ECO:0000250"/>
    <property type="project" value="UniProtKB"/>
</dbReference>
<dbReference type="GO" id="GO:0005524">
    <property type="term" value="F:ATP binding"/>
    <property type="evidence" value="ECO:0007669"/>
    <property type="project" value="UniProtKB-KW"/>
</dbReference>
<dbReference type="GO" id="GO:0016887">
    <property type="term" value="F:ATP hydrolysis activity"/>
    <property type="evidence" value="ECO:0000250"/>
    <property type="project" value="UniProtKB"/>
</dbReference>
<dbReference type="GO" id="GO:0140658">
    <property type="term" value="F:ATP-dependent chromatin remodeler activity"/>
    <property type="evidence" value="ECO:0000250"/>
    <property type="project" value="UniProtKB"/>
</dbReference>
<dbReference type="GO" id="GO:0003682">
    <property type="term" value="F:chromatin binding"/>
    <property type="evidence" value="ECO:0000318"/>
    <property type="project" value="GO_Central"/>
</dbReference>
<dbReference type="GO" id="GO:0003677">
    <property type="term" value="F:DNA binding"/>
    <property type="evidence" value="ECO:0000318"/>
    <property type="project" value="GO_Central"/>
</dbReference>
<dbReference type="GO" id="GO:0003678">
    <property type="term" value="F:DNA helicase activity"/>
    <property type="evidence" value="ECO:0000250"/>
    <property type="project" value="WormBase"/>
</dbReference>
<dbReference type="GO" id="GO:0042393">
    <property type="term" value="F:histone binding"/>
    <property type="evidence" value="ECO:0000318"/>
    <property type="project" value="GO_Central"/>
</dbReference>
<dbReference type="GO" id="GO:0008270">
    <property type="term" value="F:zinc ion binding"/>
    <property type="evidence" value="ECO:0007669"/>
    <property type="project" value="UniProtKB-KW"/>
</dbReference>
<dbReference type="GO" id="GO:0001709">
    <property type="term" value="P:cell fate determination"/>
    <property type="evidence" value="ECO:0000315"/>
    <property type="project" value="UniProtKB"/>
</dbReference>
<dbReference type="GO" id="GO:0006338">
    <property type="term" value="P:chromatin remodeling"/>
    <property type="evidence" value="ECO:0000318"/>
    <property type="project" value="GO_Central"/>
</dbReference>
<dbReference type="GO" id="GO:0046580">
    <property type="term" value="P:negative regulation of Ras protein signal transduction"/>
    <property type="evidence" value="ECO:0000315"/>
    <property type="project" value="WormBase"/>
</dbReference>
<dbReference type="GO" id="GO:0040027">
    <property type="term" value="P:negative regulation of vulval development"/>
    <property type="evidence" value="ECO:0000315"/>
    <property type="project" value="WormBase"/>
</dbReference>
<dbReference type="CDD" id="cd18667">
    <property type="entry name" value="CD1_tandem_CHD3-4_like"/>
    <property type="match status" value="1"/>
</dbReference>
<dbReference type="CDD" id="cd18662">
    <property type="entry name" value="CD2_tandem_CHD3-4_like"/>
    <property type="match status" value="1"/>
</dbReference>
<dbReference type="CDD" id="cd17994">
    <property type="entry name" value="DEXHc_CHD3_4_5"/>
    <property type="match status" value="1"/>
</dbReference>
<dbReference type="CDD" id="cd15531">
    <property type="entry name" value="PHD1_CHD_II"/>
    <property type="match status" value="1"/>
</dbReference>
<dbReference type="CDD" id="cd15532">
    <property type="entry name" value="PHD2_CHD_II"/>
    <property type="match status" value="1"/>
</dbReference>
<dbReference type="CDD" id="cd18793">
    <property type="entry name" value="SF2_C_SNF"/>
    <property type="match status" value="1"/>
</dbReference>
<dbReference type="FunFam" id="3.40.50.10810:FF:000001">
    <property type="entry name" value="chromodomain-helicase-DNA-binding protein 3 isoform X1"/>
    <property type="match status" value="1"/>
</dbReference>
<dbReference type="FunFam" id="3.40.50.300:FF:000015">
    <property type="entry name" value="chromodomain-helicase-DNA-binding protein 9 isoform X1"/>
    <property type="match status" value="1"/>
</dbReference>
<dbReference type="Gene3D" id="2.40.50.40">
    <property type="match status" value="2"/>
</dbReference>
<dbReference type="Gene3D" id="1.10.10.60">
    <property type="entry name" value="Homeodomain-like"/>
    <property type="match status" value="1"/>
</dbReference>
<dbReference type="Gene3D" id="3.40.50.300">
    <property type="entry name" value="P-loop containing nucleotide triphosphate hydrolases"/>
    <property type="match status" value="1"/>
</dbReference>
<dbReference type="Gene3D" id="3.40.50.10810">
    <property type="entry name" value="Tandem AAA-ATPase domain"/>
    <property type="match status" value="1"/>
</dbReference>
<dbReference type="Gene3D" id="3.30.40.10">
    <property type="entry name" value="Zinc/RING finger domain, C3HC4 (zinc finger)"/>
    <property type="match status" value="2"/>
</dbReference>
<dbReference type="InterPro" id="IPR012957">
    <property type="entry name" value="CHD_C2"/>
</dbReference>
<dbReference type="InterPro" id="IPR009462">
    <property type="entry name" value="CHD_II_SANT-like"/>
</dbReference>
<dbReference type="InterPro" id="IPR012958">
    <property type="entry name" value="CHD_N"/>
</dbReference>
<dbReference type="InterPro" id="IPR016197">
    <property type="entry name" value="Chromo-like_dom_sf"/>
</dbReference>
<dbReference type="InterPro" id="IPR000953">
    <property type="entry name" value="Chromo/chromo_shadow_dom"/>
</dbReference>
<dbReference type="InterPro" id="IPR023780">
    <property type="entry name" value="Chromo_domain"/>
</dbReference>
<dbReference type="InterPro" id="IPR002464">
    <property type="entry name" value="DNA/RNA_helicase_DEAH_CS"/>
</dbReference>
<dbReference type="InterPro" id="IPR009463">
    <property type="entry name" value="DUF1087"/>
</dbReference>
<dbReference type="InterPro" id="IPR014001">
    <property type="entry name" value="Helicase_ATP-bd"/>
</dbReference>
<dbReference type="InterPro" id="IPR001650">
    <property type="entry name" value="Helicase_C-like"/>
</dbReference>
<dbReference type="InterPro" id="IPR027417">
    <property type="entry name" value="P-loop_NTPase"/>
</dbReference>
<dbReference type="InterPro" id="IPR038718">
    <property type="entry name" value="SNF2-like_sf"/>
</dbReference>
<dbReference type="InterPro" id="IPR049730">
    <property type="entry name" value="SNF2/RAD54-like_C"/>
</dbReference>
<dbReference type="InterPro" id="IPR000330">
    <property type="entry name" value="SNF2_N"/>
</dbReference>
<dbReference type="InterPro" id="IPR019786">
    <property type="entry name" value="Zinc_finger_PHD-type_CS"/>
</dbReference>
<dbReference type="InterPro" id="IPR011011">
    <property type="entry name" value="Znf_FYVE_PHD"/>
</dbReference>
<dbReference type="InterPro" id="IPR001965">
    <property type="entry name" value="Znf_PHD"/>
</dbReference>
<dbReference type="InterPro" id="IPR019787">
    <property type="entry name" value="Znf_PHD-finger"/>
</dbReference>
<dbReference type="InterPro" id="IPR001841">
    <property type="entry name" value="Znf_RING"/>
</dbReference>
<dbReference type="InterPro" id="IPR013083">
    <property type="entry name" value="Znf_RING/FYVE/PHD"/>
</dbReference>
<dbReference type="PANTHER" id="PTHR45623:SF17">
    <property type="entry name" value="CHROMODOMAIN-HELICASE-DNA-BINDING PROTEIN 3-RELATED"/>
    <property type="match status" value="1"/>
</dbReference>
<dbReference type="PANTHER" id="PTHR45623">
    <property type="entry name" value="CHROMODOMAIN-HELICASE-DNA-BINDING PROTEIN 3-RELATED-RELATED"/>
    <property type="match status" value="1"/>
</dbReference>
<dbReference type="Pfam" id="PF08074">
    <property type="entry name" value="CHDCT2"/>
    <property type="match status" value="1"/>
</dbReference>
<dbReference type="Pfam" id="PF06461">
    <property type="entry name" value="CHDII_SANT-like"/>
    <property type="match status" value="1"/>
</dbReference>
<dbReference type="Pfam" id="PF08073">
    <property type="entry name" value="CHDNT"/>
    <property type="match status" value="1"/>
</dbReference>
<dbReference type="Pfam" id="PF00385">
    <property type="entry name" value="Chromo"/>
    <property type="match status" value="1"/>
</dbReference>
<dbReference type="Pfam" id="PF06465">
    <property type="entry name" value="DUF1087"/>
    <property type="match status" value="1"/>
</dbReference>
<dbReference type="Pfam" id="PF00271">
    <property type="entry name" value="Helicase_C"/>
    <property type="match status" value="1"/>
</dbReference>
<dbReference type="Pfam" id="PF00628">
    <property type="entry name" value="PHD"/>
    <property type="match status" value="2"/>
</dbReference>
<dbReference type="Pfam" id="PF00176">
    <property type="entry name" value="SNF2-rel_dom"/>
    <property type="match status" value="1"/>
</dbReference>
<dbReference type="SMART" id="SM00298">
    <property type="entry name" value="CHROMO"/>
    <property type="match status" value="2"/>
</dbReference>
<dbReference type="SMART" id="SM00487">
    <property type="entry name" value="DEXDc"/>
    <property type="match status" value="1"/>
</dbReference>
<dbReference type="SMART" id="SM01146">
    <property type="entry name" value="DUF1086"/>
    <property type="match status" value="1"/>
</dbReference>
<dbReference type="SMART" id="SM01147">
    <property type="entry name" value="DUF1087"/>
    <property type="match status" value="1"/>
</dbReference>
<dbReference type="SMART" id="SM00490">
    <property type="entry name" value="HELICc"/>
    <property type="match status" value="1"/>
</dbReference>
<dbReference type="SMART" id="SM00249">
    <property type="entry name" value="PHD"/>
    <property type="match status" value="2"/>
</dbReference>
<dbReference type="SMART" id="SM00184">
    <property type="entry name" value="RING"/>
    <property type="match status" value="2"/>
</dbReference>
<dbReference type="SUPFAM" id="SSF54160">
    <property type="entry name" value="Chromo domain-like"/>
    <property type="match status" value="2"/>
</dbReference>
<dbReference type="SUPFAM" id="SSF57903">
    <property type="entry name" value="FYVE/PHD zinc finger"/>
    <property type="match status" value="2"/>
</dbReference>
<dbReference type="SUPFAM" id="SSF52540">
    <property type="entry name" value="P-loop containing nucleoside triphosphate hydrolases"/>
    <property type="match status" value="2"/>
</dbReference>
<dbReference type="PROSITE" id="PS50013">
    <property type="entry name" value="CHROMO_2"/>
    <property type="match status" value="1"/>
</dbReference>
<dbReference type="PROSITE" id="PS00690">
    <property type="entry name" value="DEAH_ATP_HELICASE"/>
    <property type="match status" value="1"/>
</dbReference>
<dbReference type="PROSITE" id="PS51192">
    <property type="entry name" value="HELICASE_ATP_BIND_1"/>
    <property type="match status" value="1"/>
</dbReference>
<dbReference type="PROSITE" id="PS51194">
    <property type="entry name" value="HELICASE_CTER"/>
    <property type="match status" value="1"/>
</dbReference>
<dbReference type="PROSITE" id="PS01359">
    <property type="entry name" value="ZF_PHD_1"/>
    <property type="match status" value="2"/>
</dbReference>
<dbReference type="PROSITE" id="PS50016">
    <property type="entry name" value="ZF_PHD_2"/>
    <property type="match status" value="2"/>
</dbReference>
<sequence>MSDDQHESIDGDETMEEDSMLAEGHEDGEEDVGEDEEEVETEESQGVPTTSEKKKPPPKKKKGGKKSSKKKNNCDYPDPYKSTSAEISAAIGLTDVDVDYEQEEFQSITNLKNFSSLVKPYILKVNPGTNVTKMYPLFQVKYKEFQDHMTAHGKSIQKQQRAKFVPVPVPVTPQEKIIPQKTRSSARRKRRDGSDGEGGGHDSDQEFEALIKQHEKQQDEAEKGKEEARINRAAAKVDKRKAALESARASKRARKEQGVVEENHQENCEVCNQDGELMLCDTCTRAYHVACIDENMEQPPEGDWSCPHCEEHGPDVLIVEEEPAKANMDYCRICKETSNILLCDTCPSSYHAYCIDPPLTEIPEGEWSCPRCIIPEPAQRIEKILSWRWKEISYPEPLECKEGEEASKDDVFLKPPRKMEPRREREFFVKWKYLAYWQCEWLSETLMDVYFTALVRMYWRKVDSENPPIFEESTLSRHHSDHDPYKLRERFYQYGVKPEWMQIHRIINHLSYAKSQQDYLVKWKELSYEHATWERDDTDIANYEDAIIKYWHHRERMLNDEVPRNVQKMIAKQREAKGLGPKEDEVTSRRKKREKIDILKKYEVQPDFISETGGNLHPYQLEGINWLRHCWSNGTDAILADEMGLGKTVQSLTFLYTLMKEGHTKGPFLIAAPLSTIINWEREAELWCPDFYVVTYVGDRESRMVIREHEFSFVDGAVRGGPKVSKIKTLENLKFHVLLTSYECINMDKAILSSIDWAALVVDEAHRLKNNQSTFFKNLREYNIQYRVLLTGTPLQNNLEELFHLLNFLAPDRFNQLESFTAEFSEISKEDQIEKLHNLLGPHMLRRLKADVLTGMPSKQELIVRVELSAMQKKYYKNILTRNFDALNVKNGGTQMSLINIIMELKKCCNHPYLFMKACLEAPKLKNGMYEGSALIKNAGKFVLLQKMLRKLKDGGHRVLIFSQMTMMLDILEDFCDVEGYKYERIDGSITGQQRQDAIDRYNAPGAKQFVFLLSTRAGGLGINLATADTVIIYDSDWNPHNDIQAFSRAHRLGQKHKVMIYRFVTKGSVEERITSVAKKKMLLTHLVVRAGLGAKDGKSMSKTELDDVLRWGTEELFKEEEAPVEGADGEGTSSKKPNEQEIVWDDAAVDFLLDRNKEEEGQDGEKKEHWTNEYLSSFKVATYNTKEADDADDDEDETEVIKEGTEEQDPNYWEKLLKHHYEQDQETELQKLGKGKRVRRQVNYASENMGQDWSAQNNQQQEEDDGSEYGSDNGELLQTDEDYEERRRRREERSEKLPPLLAKVNGQIEVLGFNPRQRKAFYNAVMRWGMPPQDLTQSSWQVRDLRNKSEKVFKAYSSLFMRHLCEPVVDNSDSFMDGVPREGLNRQAVLSRIGLMSILRKKVQEFEKFNGEWSMPETREKMLATAAQASVSNLPGMIKIKEEPIDIDETPMDVDQSNITKTEELASEVKVEEEPKAPRLPYKFNICDGGYTELHSLWINEEKVARNGKEYEIWHRRHDFWLLAAVAVYGYGRYQINFQDIMNDPKFSIVNEPFKQTGADPATNFADVKNKFLARRFKLLEQSLVIEEQLRRAAHINKQQSPDQVGQLAQHFSELEHTADAHVNIARESNNGNRNANAILHKCLAQLDDLLSDLKTDVARLPATISQVRPVTERLQMSERQILSRLVVAKDPDAAPSKPALPPSGPFITPLFNQNFTTIQPKFPSLFDCNLSPDDEPIDIEGSISAAVAEASRASSIAATKDEPMDTSDKDIPSTSAAAGSSYPRY</sequence>
<proteinExistence type="evidence at transcript level"/>